<sequence>MNAKIIASLAFTSMFSLSTLLSPAHAEEQEKALNFGIISTESQQNLKPQWTPFLQDMEKKLGVKVNAFFAPDYAGIIQGMRFNKVDIAWYGNLSAMEAVDRANGQVFAQTVAADGSPGYWSVLIVNKDSPINNLNDLLAKRKDLTFGNGDPNSTSGFLVPGYYVFAKNNISASDFKRTVNAGHETNALAVANKQVDVATNNTENLDKLKTSAPEKLKELKVIWKSPLIPGDPIVWRKNLSETTKDKIYDFFMNYGKTPEEKAVLERLGWAPFRASSDLQLVPIRQLALFKEMQGVKSNKGLNEQDKLAKTTEIQAQLDDLDRLNNALSAMSSVSKAVQ</sequence>
<dbReference type="EMBL" id="J05260">
    <property type="protein sequence ID" value="AAA24340.1"/>
    <property type="molecule type" value="Genomic_DNA"/>
</dbReference>
<dbReference type="EMBL" id="D90227">
    <property type="protein sequence ID" value="BAA14263.1"/>
    <property type="molecule type" value="Genomic_DNA"/>
</dbReference>
<dbReference type="EMBL" id="U14003">
    <property type="protein sequence ID" value="AAA97004.1"/>
    <property type="molecule type" value="Genomic_DNA"/>
</dbReference>
<dbReference type="EMBL" id="U00096">
    <property type="protein sequence ID" value="AAC77066.1"/>
    <property type="molecule type" value="Genomic_DNA"/>
</dbReference>
<dbReference type="EMBL" id="AP009048">
    <property type="protein sequence ID" value="BAE78107.1"/>
    <property type="molecule type" value="Genomic_DNA"/>
</dbReference>
<dbReference type="PIR" id="S56333">
    <property type="entry name" value="S56333"/>
</dbReference>
<dbReference type="RefSeq" id="NP_418529.1">
    <property type="nucleotide sequence ID" value="NC_000913.3"/>
</dbReference>
<dbReference type="RefSeq" id="WP_000992002.1">
    <property type="nucleotide sequence ID" value="NZ_SSZK01000016.1"/>
</dbReference>
<dbReference type="BioGRID" id="4263091">
    <property type="interactions" value="148"/>
</dbReference>
<dbReference type="DIP" id="DIP-10483N"/>
<dbReference type="FunCoup" id="P16682">
    <property type="interactions" value="281"/>
</dbReference>
<dbReference type="IntAct" id="P16682">
    <property type="interactions" value="4"/>
</dbReference>
<dbReference type="STRING" id="511145.b4105"/>
<dbReference type="TCDB" id="3.A.1.9.1">
    <property type="family name" value="the atp-binding cassette (abc) superfamily"/>
</dbReference>
<dbReference type="PaxDb" id="511145-b4105"/>
<dbReference type="EnsemblBacteria" id="AAC77066">
    <property type="protein sequence ID" value="AAC77066"/>
    <property type="gene ID" value="b4105"/>
</dbReference>
<dbReference type="GeneID" id="75203255"/>
<dbReference type="GeneID" id="948624"/>
<dbReference type="KEGG" id="ecj:JW4066"/>
<dbReference type="KEGG" id="eco:b4105"/>
<dbReference type="KEGG" id="ecoc:C3026_22180"/>
<dbReference type="PATRIC" id="fig|1411691.4.peg.2595"/>
<dbReference type="EchoBASE" id="EB0708"/>
<dbReference type="eggNOG" id="COG3221">
    <property type="taxonomic scope" value="Bacteria"/>
</dbReference>
<dbReference type="HOGENOM" id="CLU_051472_2_0_6"/>
<dbReference type="InParanoid" id="P16682"/>
<dbReference type="OMA" id="CLADHLK"/>
<dbReference type="OrthoDB" id="5318791at2"/>
<dbReference type="PhylomeDB" id="P16682"/>
<dbReference type="BioCyc" id="EcoCyc:PHND-MONOMER"/>
<dbReference type="PRO" id="PR:P16682"/>
<dbReference type="Proteomes" id="UP000000625">
    <property type="component" value="Chromosome"/>
</dbReference>
<dbReference type="GO" id="GO:0043190">
    <property type="term" value="C:ATP-binding cassette (ABC) transporter complex"/>
    <property type="evidence" value="ECO:0007669"/>
    <property type="project" value="InterPro"/>
</dbReference>
<dbReference type="GO" id="GO:0042597">
    <property type="term" value="C:periplasmic space"/>
    <property type="evidence" value="ECO:0007669"/>
    <property type="project" value="UniProtKB-SubCell"/>
</dbReference>
<dbReference type="GO" id="GO:0015716">
    <property type="term" value="P:organic phosphonate transport"/>
    <property type="evidence" value="ECO:0007669"/>
    <property type="project" value="UniProtKB-KW"/>
</dbReference>
<dbReference type="GO" id="GO:0055085">
    <property type="term" value="P:transmembrane transport"/>
    <property type="evidence" value="ECO:0007669"/>
    <property type="project" value="InterPro"/>
</dbReference>
<dbReference type="CDD" id="cd13575">
    <property type="entry name" value="PBP2_PnhD"/>
    <property type="match status" value="1"/>
</dbReference>
<dbReference type="Gene3D" id="1.20.58.90">
    <property type="match status" value="1"/>
</dbReference>
<dbReference type="Gene3D" id="3.40.190.10">
    <property type="entry name" value="Periplasmic binding protein-like II"/>
    <property type="match status" value="2"/>
</dbReference>
<dbReference type="InterPro" id="IPR005770">
    <property type="entry name" value="PhnD"/>
</dbReference>
<dbReference type="InterPro" id="IPR017797">
    <property type="entry name" value="Phosphnate-bd"/>
</dbReference>
<dbReference type="NCBIfam" id="TIGR01098">
    <property type="entry name" value="3A0109s03R"/>
    <property type="match status" value="1"/>
</dbReference>
<dbReference type="NCBIfam" id="TIGR03431">
    <property type="entry name" value="PhnD"/>
    <property type="match status" value="1"/>
</dbReference>
<dbReference type="PANTHER" id="PTHR30043">
    <property type="entry name" value="PHOSPHONATES TRANSPORT SYSTEM PERMEASE PROTEIN"/>
    <property type="match status" value="1"/>
</dbReference>
<dbReference type="PANTHER" id="PTHR30043:SF10">
    <property type="entry name" value="PHOSPHONATES-BINDING PERIPLASMIC PROTEIN"/>
    <property type="match status" value="1"/>
</dbReference>
<dbReference type="Pfam" id="PF12974">
    <property type="entry name" value="Phosphonate-bd"/>
    <property type="match status" value="1"/>
</dbReference>
<dbReference type="SUPFAM" id="SSF53850">
    <property type="entry name" value="Periplasmic binding protein-like II"/>
    <property type="match status" value="1"/>
</dbReference>
<keyword id="KW-0574">Periplasm</keyword>
<keyword id="KW-0918">Phosphonate transport</keyword>
<keyword id="KW-1185">Reference proteome</keyword>
<keyword id="KW-0732">Signal</keyword>
<keyword id="KW-0813">Transport</keyword>
<organism>
    <name type="scientific">Escherichia coli (strain K12)</name>
    <dbReference type="NCBI Taxonomy" id="83333"/>
    <lineage>
        <taxon>Bacteria</taxon>
        <taxon>Pseudomonadati</taxon>
        <taxon>Pseudomonadota</taxon>
        <taxon>Gammaproteobacteria</taxon>
        <taxon>Enterobacterales</taxon>
        <taxon>Enterobacteriaceae</taxon>
        <taxon>Escherichia</taxon>
    </lineage>
</organism>
<proteinExistence type="inferred from homology"/>
<name>PHND_ECOLI</name>
<protein>
    <recommendedName>
        <fullName>Phosphonates-binding periplasmic protein</fullName>
    </recommendedName>
</protein>
<feature type="signal peptide" evidence="1">
    <location>
        <begin position="1"/>
        <end position="26"/>
    </location>
</feature>
<feature type="chain" id="PRO_0000031836" description="Phosphonates-binding periplasmic protein">
    <location>
        <begin position="27"/>
        <end position="338"/>
    </location>
</feature>
<feature type="sequence variant" description="In strain: B.">
    <original>E</original>
    <variation>A</variation>
    <location>
        <position position="312"/>
    </location>
</feature>
<reference key="1">
    <citation type="journal article" date="1990" name="J. Biol. Chem.">
        <title>Molecular biology of carbon-phosphorus bond cleavage. Cloning and sequencing of the phn (psiD) genes involved in alkylphosphonate uptake and C-P lyase activity in Escherichia coli B.</title>
        <authorList>
            <person name="Chen C.-M."/>
            <person name="Ye Q.-Z."/>
            <person name="Zhu Z."/>
            <person name="Wanner B.L."/>
            <person name="Walsh C.T."/>
        </authorList>
    </citation>
    <scope>NUCLEOTIDE SEQUENCE [GENOMIC DNA]</scope>
    <source>
        <strain>B</strain>
    </source>
</reference>
<reference key="2">
    <citation type="journal article" date="1991" name="J. Bacteriol.">
        <title>Molecular analysis of the cryptic and functional phn operons for phosphonate use in Escherichia coli K-12.</title>
        <authorList>
            <person name="Makino K."/>
            <person name="Kim S.K."/>
            <person name="Shinagawa H."/>
            <person name="Amemura M."/>
            <person name="Nakata A."/>
        </authorList>
    </citation>
    <scope>NUCLEOTIDE SEQUENCE [GENOMIC DNA]</scope>
    <source>
        <strain>K12</strain>
    </source>
</reference>
<reference key="3">
    <citation type="journal article" date="1995" name="Nucleic Acids Res.">
        <title>Analysis of the Escherichia coli genome VI: DNA sequence of the region from 92.8 through 100 minutes.</title>
        <authorList>
            <person name="Burland V.D."/>
            <person name="Plunkett G. III"/>
            <person name="Sofia H.J."/>
            <person name="Daniels D.L."/>
            <person name="Blattner F.R."/>
        </authorList>
    </citation>
    <scope>NUCLEOTIDE SEQUENCE [LARGE SCALE GENOMIC DNA]</scope>
    <source>
        <strain>K12 / MG1655 / ATCC 47076</strain>
    </source>
</reference>
<reference key="4">
    <citation type="journal article" date="1997" name="Science">
        <title>The complete genome sequence of Escherichia coli K-12.</title>
        <authorList>
            <person name="Blattner F.R."/>
            <person name="Plunkett G. III"/>
            <person name="Bloch C.A."/>
            <person name="Perna N.T."/>
            <person name="Burland V."/>
            <person name="Riley M."/>
            <person name="Collado-Vides J."/>
            <person name="Glasner J.D."/>
            <person name="Rode C.K."/>
            <person name="Mayhew G.F."/>
            <person name="Gregor J."/>
            <person name="Davis N.W."/>
            <person name="Kirkpatrick H.A."/>
            <person name="Goeden M.A."/>
            <person name="Rose D.J."/>
            <person name="Mau B."/>
            <person name="Shao Y."/>
        </authorList>
    </citation>
    <scope>NUCLEOTIDE SEQUENCE [LARGE SCALE GENOMIC DNA]</scope>
    <source>
        <strain>K12 / MG1655 / ATCC 47076</strain>
    </source>
</reference>
<reference key="5">
    <citation type="journal article" date="2006" name="Mol. Syst. Biol.">
        <title>Highly accurate genome sequences of Escherichia coli K-12 strains MG1655 and W3110.</title>
        <authorList>
            <person name="Hayashi K."/>
            <person name="Morooka N."/>
            <person name="Yamamoto Y."/>
            <person name="Fujita K."/>
            <person name="Isono K."/>
            <person name="Choi S."/>
            <person name="Ohtsubo E."/>
            <person name="Baba T."/>
            <person name="Wanner B.L."/>
            <person name="Mori H."/>
            <person name="Horiuchi T."/>
        </authorList>
    </citation>
    <scope>NUCLEOTIDE SEQUENCE [LARGE SCALE GENOMIC DNA]</scope>
    <source>
        <strain>K12 / W3110 / ATCC 27325 / DSM 5911</strain>
    </source>
</reference>
<reference key="6">
    <citation type="journal article" date="2006" name="Protein Sci.">
        <title>Identification of cognate ligands for the Escherichia coli phnD protein product and engineering of a reagentless fluorescent biosensor for phosphonates.</title>
        <authorList>
            <person name="Rizk S.S."/>
            <person name="Cuneo M.J."/>
            <person name="Hellinga H.W."/>
        </authorList>
    </citation>
    <scope>FUNCTION</scope>
    <source>
        <strain>K12 / XL1-Blue</strain>
    </source>
</reference>
<gene>
    <name type="primary">phnD</name>
    <name type="synonym">psiD</name>
    <name type="ordered locus">b4105</name>
    <name type="ordered locus">JW4066</name>
</gene>
<comment type="function">
    <text evidence="2">Phosphonate binding protein that is part of the phosphonate uptake system. Exhibits high affinity for 2-aminoethylphosphonate, and somewhat less affinity to ethylphosphonate, methylphosphonate, phosphonoacetate and phenylphosphonate.</text>
</comment>
<comment type="subunit">
    <text evidence="3">The complex is composed of two ATP-binding proteins (PhnC), two transmembrane proteins (PhnE) and a solute-binding protein (PhnD).</text>
</comment>
<comment type="subcellular location">
    <subcellularLocation>
        <location evidence="3">Periplasm</location>
    </subcellularLocation>
</comment>
<comment type="miscellaneous">
    <text>The sequence shown is that of strain K12.</text>
</comment>
<comment type="similarity">
    <text evidence="3">Belongs to the phosphate/phosphite/phosphonate binding protein family.</text>
</comment>
<accession>P16682</accession>
<accession>Q2M6J9</accession>
<evidence type="ECO:0000255" key="1"/>
<evidence type="ECO:0000269" key="2">
    <source>
    </source>
</evidence>
<evidence type="ECO:0000305" key="3"/>